<feature type="chain" id="PRO_0000248075" description="Translation machinery-associated protein 7 homolog">
    <location>
        <begin position="1"/>
        <end position="64"/>
    </location>
</feature>
<feature type="region of interest" description="Disordered" evidence="2">
    <location>
        <begin position="1"/>
        <end position="64"/>
    </location>
</feature>
<feature type="coiled-coil region" evidence="1">
    <location>
        <begin position="21"/>
        <end position="50"/>
    </location>
</feature>
<feature type="compositionally biased region" description="Basic and acidic residues" evidence="2">
    <location>
        <begin position="27"/>
        <end position="44"/>
    </location>
</feature>
<dbReference type="EMBL" id="DQ439990">
    <property type="protein sequence ID" value="ABF18023.1"/>
    <property type="molecule type" value="mRNA"/>
</dbReference>
<dbReference type="EMBL" id="CH477448">
    <property type="status" value="NOT_ANNOTATED_CDS"/>
    <property type="molecule type" value="Genomic_DNA"/>
</dbReference>
<dbReference type="RefSeq" id="XP_011493391.1">
    <property type="nucleotide sequence ID" value="XM_011495089.2"/>
</dbReference>
<dbReference type="FunCoup" id="Q1HRV4">
    <property type="interactions" value="951"/>
</dbReference>
<dbReference type="STRING" id="7159.Q1HRV4"/>
<dbReference type="PaxDb" id="7159-AAEL017290-PA"/>
<dbReference type="EnsemblMetazoa" id="AAEL017290-RA">
    <property type="protein sequence ID" value="AAEL017290-PA"/>
    <property type="gene ID" value="AAEL017290"/>
</dbReference>
<dbReference type="GeneID" id="23687710"/>
<dbReference type="KEGG" id="aag:23687710"/>
<dbReference type="VEuPathDB" id="VectorBase:AAEL017290"/>
<dbReference type="eggNOG" id="KOG4766">
    <property type="taxonomic scope" value="Eukaryota"/>
</dbReference>
<dbReference type="HOGENOM" id="CLU_184661_2_0_1"/>
<dbReference type="InParanoid" id="Q1HRV4"/>
<dbReference type="Proteomes" id="UP000008820">
    <property type="component" value="Chromosome 2"/>
</dbReference>
<dbReference type="Proteomes" id="UP000682892">
    <property type="component" value="Unassembled WGS sequence"/>
</dbReference>
<dbReference type="InterPro" id="IPR015157">
    <property type="entry name" value="TMA7"/>
</dbReference>
<dbReference type="PANTHER" id="PTHR28632">
    <property type="entry name" value="TRANSLATION MACHINERY-ASSOCIATED PROTEIN 7"/>
    <property type="match status" value="1"/>
</dbReference>
<dbReference type="Pfam" id="PF09072">
    <property type="entry name" value="TMA7"/>
    <property type="match status" value="1"/>
</dbReference>
<reference key="1">
    <citation type="journal article" date="2007" name="BMC Genomics">
        <title>An annotated catalogue of salivary gland transcripts in the adult female mosquito, Aedes aegypti.</title>
        <authorList>
            <person name="Ribeiro J.M.C."/>
            <person name="Arca B."/>
            <person name="Lombardo F."/>
            <person name="Calvo E."/>
            <person name="Phan V.M."/>
            <person name="Chandra P.K."/>
            <person name="Wikel S.K."/>
        </authorList>
    </citation>
    <scope>NUCLEOTIDE SEQUENCE [LARGE SCALE MRNA]</scope>
    <source>
        <strain>Black-eyed Liverpool</strain>
        <tissue>Salivary gland</tissue>
    </source>
</reference>
<reference key="2">
    <citation type="journal article" date="2007" name="Science">
        <title>Genome sequence of Aedes aegypti, a major arbovirus vector.</title>
        <authorList>
            <person name="Nene V."/>
            <person name="Wortman J.R."/>
            <person name="Lawson D."/>
            <person name="Haas B.J."/>
            <person name="Kodira C.D."/>
            <person name="Tu Z.J."/>
            <person name="Loftus B.J."/>
            <person name="Xi Z."/>
            <person name="Megy K."/>
            <person name="Grabherr M."/>
            <person name="Ren Q."/>
            <person name="Zdobnov E.M."/>
            <person name="Lobo N.F."/>
            <person name="Campbell K.S."/>
            <person name="Brown S.E."/>
            <person name="Bonaldo M.F."/>
            <person name="Zhu J."/>
            <person name="Sinkins S.P."/>
            <person name="Hogenkamp D.G."/>
            <person name="Amedeo P."/>
            <person name="Arensburger P."/>
            <person name="Atkinson P.W."/>
            <person name="Bidwell S.L."/>
            <person name="Biedler J."/>
            <person name="Birney E."/>
            <person name="Bruggner R.V."/>
            <person name="Costas J."/>
            <person name="Coy M.R."/>
            <person name="Crabtree J."/>
            <person name="Crawford M."/>
            <person name="DeBruyn B."/>
            <person name="DeCaprio D."/>
            <person name="Eiglmeier K."/>
            <person name="Eisenstadt E."/>
            <person name="El-Dorry H."/>
            <person name="Gelbart W.M."/>
            <person name="Gomes S.L."/>
            <person name="Hammond M."/>
            <person name="Hannick L.I."/>
            <person name="Hogan J.R."/>
            <person name="Holmes M.H."/>
            <person name="Jaffe D."/>
            <person name="Johnston S.J."/>
            <person name="Kennedy R.C."/>
            <person name="Koo H."/>
            <person name="Kravitz S."/>
            <person name="Kriventseva E.V."/>
            <person name="Kulp D."/>
            <person name="Labutti K."/>
            <person name="Lee E."/>
            <person name="Li S."/>
            <person name="Lovin D.D."/>
            <person name="Mao C."/>
            <person name="Mauceli E."/>
            <person name="Menck C.F."/>
            <person name="Miller J.R."/>
            <person name="Montgomery P."/>
            <person name="Mori A."/>
            <person name="Nascimento A.L."/>
            <person name="Naveira H.F."/>
            <person name="Nusbaum C."/>
            <person name="O'Leary S.B."/>
            <person name="Orvis J."/>
            <person name="Pertea M."/>
            <person name="Quesneville H."/>
            <person name="Reidenbach K.R."/>
            <person name="Rogers Y.-H.C."/>
            <person name="Roth C.W."/>
            <person name="Schneider J.R."/>
            <person name="Schatz M."/>
            <person name="Shumway M."/>
            <person name="Stanke M."/>
            <person name="Stinson E.O."/>
            <person name="Tubio J.M.C."/>
            <person name="Vanzee J.P."/>
            <person name="Verjovski-Almeida S."/>
            <person name="Werner D."/>
            <person name="White O.R."/>
            <person name="Wyder S."/>
            <person name="Zeng Q."/>
            <person name="Zhao Q."/>
            <person name="Zhao Y."/>
            <person name="Hill C.A."/>
            <person name="Raikhel A.S."/>
            <person name="Soares M.B."/>
            <person name="Knudson D.L."/>
            <person name="Lee N.H."/>
            <person name="Galagan J."/>
            <person name="Salzberg S.L."/>
            <person name="Paulsen I.T."/>
            <person name="Dimopoulos G."/>
            <person name="Collins F.H."/>
            <person name="Bruce B."/>
            <person name="Fraser-Liggett C.M."/>
            <person name="Severson D.W."/>
        </authorList>
    </citation>
    <scope>NUCLEOTIDE SEQUENCE [LARGE SCALE GENOMIC DNA]</scope>
    <source>
        <strain>LVPib12</strain>
    </source>
</reference>
<sequence>MTGREGGKKKPLKQPKKDGKEMDEEDMAFKQKQKEQQKAMEAAKQKAAKGGPLVTGGIKKSGKK</sequence>
<keyword id="KW-0175">Coiled coil</keyword>
<keyword id="KW-1185">Reference proteome</keyword>
<name>TMA7_AEDAE</name>
<proteinExistence type="inferred from homology"/>
<evidence type="ECO:0000255" key="1"/>
<evidence type="ECO:0000256" key="2">
    <source>
        <dbReference type="SAM" id="MobiDB-lite"/>
    </source>
</evidence>
<evidence type="ECO:0000305" key="3"/>
<protein>
    <recommendedName>
        <fullName>Translation machinery-associated protein 7 homolog</fullName>
    </recommendedName>
    <alternativeName>
        <fullName>Coiled-coil domain-containing protein 72 homolog</fullName>
    </alternativeName>
</protein>
<comment type="similarity">
    <text evidence="3">Belongs to the TMA7 family.</text>
</comment>
<organism>
    <name type="scientific">Aedes aegypti</name>
    <name type="common">Yellowfever mosquito</name>
    <name type="synonym">Culex aegypti</name>
    <dbReference type="NCBI Taxonomy" id="7159"/>
    <lineage>
        <taxon>Eukaryota</taxon>
        <taxon>Metazoa</taxon>
        <taxon>Ecdysozoa</taxon>
        <taxon>Arthropoda</taxon>
        <taxon>Hexapoda</taxon>
        <taxon>Insecta</taxon>
        <taxon>Pterygota</taxon>
        <taxon>Neoptera</taxon>
        <taxon>Endopterygota</taxon>
        <taxon>Diptera</taxon>
        <taxon>Nematocera</taxon>
        <taxon>Culicoidea</taxon>
        <taxon>Culicidae</taxon>
        <taxon>Culicinae</taxon>
        <taxon>Aedini</taxon>
        <taxon>Aedes</taxon>
        <taxon>Stegomyia</taxon>
    </lineage>
</organism>
<accession>Q1HRV4</accession>